<gene>
    <name evidence="1" type="primary">miaA</name>
    <name type="ordered locus">Teth39_1176</name>
</gene>
<dbReference type="EC" id="2.5.1.75" evidence="1"/>
<dbReference type="EMBL" id="CP000924">
    <property type="protein sequence ID" value="ABY94830.1"/>
    <property type="molecule type" value="Genomic_DNA"/>
</dbReference>
<dbReference type="RefSeq" id="WP_003866788.1">
    <property type="nucleotide sequence ID" value="NC_010321.1"/>
</dbReference>
<dbReference type="SMR" id="B0K9L7"/>
<dbReference type="STRING" id="340099.Teth39_1176"/>
<dbReference type="KEGG" id="tpd:Teth39_1176"/>
<dbReference type="eggNOG" id="COG0324">
    <property type="taxonomic scope" value="Bacteria"/>
</dbReference>
<dbReference type="HOGENOM" id="CLU_032616_0_1_9"/>
<dbReference type="Proteomes" id="UP000002156">
    <property type="component" value="Chromosome"/>
</dbReference>
<dbReference type="GO" id="GO:0005524">
    <property type="term" value="F:ATP binding"/>
    <property type="evidence" value="ECO:0007669"/>
    <property type="project" value="UniProtKB-UniRule"/>
</dbReference>
<dbReference type="GO" id="GO:0052381">
    <property type="term" value="F:tRNA dimethylallyltransferase activity"/>
    <property type="evidence" value="ECO:0007669"/>
    <property type="project" value="UniProtKB-UniRule"/>
</dbReference>
<dbReference type="GO" id="GO:0006400">
    <property type="term" value="P:tRNA modification"/>
    <property type="evidence" value="ECO:0007669"/>
    <property type="project" value="TreeGrafter"/>
</dbReference>
<dbReference type="FunFam" id="1.10.20.140:FF:000001">
    <property type="entry name" value="tRNA dimethylallyltransferase"/>
    <property type="match status" value="1"/>
</dbReference>
<dbReference type="Gene3D" id="1.10.20.140">
    <property type="match status" value="1"/>
</dbReference>
<dbReference type="Gene3D" id="3.40.50.300">
    <property type="entry name" value="P-loop containing nucleotide triphosphate hydrolases"/>
    <property type="match status" value="1"/>
</dbReference>
<dbReference type="HAMAP" id="MF_00185">
    <property type="entry name" value="IPP_trans"/>
    <property type="match status" value="1"/>
</dbReference>
<dbReference type="InterPro" id="IPR039657">
    <property type="entry name" value="Dimethylallyltransferase"/>
</dbReference>
<dbReference type="InterPro" id="IPR018022">
    <property type="entry name" value="IPT"/>
</dbReference>
<dbReference type="InterPro" id="IPR027417">
    <property type="entry name" value="P-loop_NTPase"/>
</dbReference>
<dbReference type="NCBIfam" id="TIGR00174">
    <property type="entry name" value="miaA"/>
    <property type="match status" value="1"/>
</dbReference>
<dbReference type="PANTHER" id="PTHR11088">
    <property type="entry name" value="TRNA DIMETHYLALLYLTRANSFERASE"/>
    <property type="match status" value="1"/>
</dbReference>
<dbReference type="PANTHER" id="PTHR11088:SF60">
    <property type="entry name" value="TRNA DIMETHYLALLYLTRANSFERASE"/>
    <property type="match status" value="1"/>
</dbReference>
<dbReference type="Pfam" id="PF01715">
    <property type="entry name" value="IPPT"/>
    <property type="match status" value="1"/>
</dbReference>
<dbReference type="SUPFAM" id="SSF52540">
    <property type="entry name" value="P-loop containing nucleoside triphosphate hydrolases"/>
    <property type="match status" value="2"/>
</dbReference>
<protein>
    <recommendedName>
        <fullName evidence="1">tRNA dimethylallyltransferase</fullName>
        <ecNumber evidence="1">2.5.1.75</ecNumber>
    </recommendedName>
    <alternativeName>
        <fullName evidence="1">Dimethylallyl diphosphate:tRNA dimethylallyltransferase</fullName>
        <shortName evidence="1">DMAPP:tRNA dimethylallyltransferase</shortName>
        <shortName evidence="1">DMATase</shortName>
    </alternativeName>
    <alternativeName>
        <fullName evidence="1">Isopentenyl-diphosphate:tRNA isopentenyltransferase</fullName>
        <shortName evidence="1">IPP transferase</shortName>
        <shortName evidence="1">IPPT</shortName>
        <shortName evidence="1">IPTase</shortName>
    </alternativeName>
</protein>
<evidence type="ECO:0000255" key="1">
    <source>
        <dbReference type="HAMAP-Rule" id="MF_00185"/>
    </source>
</evidence>
<organism>
    <name type="scientific">Thermoanaerobacter pseudethanolicus (strain ATCC 33223 / 39E)</name>
    <name type="common">Clostridium thermohydrosulfuricum</name>
    <dbReference type="NCBI Taxonomy" id="340099"/>
    <lineage>
        <taxon>Bacteria</taxon>
        <taxon>Bacillati</taxon>
        <taxon>Bacillota</taxon>
        <taxon>Clostridia</taxon>
        <taxon>Thermoanaerobacterales</taxon>
        <taxon>Thermoanaerobacteraceae</taxon>
        <taxon>Thermoanaerobacter</taxon>
    </lineage>
</organism>
<feature type="chain" id="PRO_1000098695" description="tRNA dimethylallyltransferase">
    <location>
        <begin position="1"/>
        <end position="315"/>
    </location>
</feature>
<feature type="region of interest" description="Interaction with substrate tRNA" evidence="1">
    <location>
        <begin position="35"/>
        <end position="38"/>
    </location>
</feature>
<feature type="binding site" evidence="1">
    <location>
        <begin position="10"/>
        <end position="17"/>
    </location>
    <ligand>
        <name>ATP</name>
        <dbReference type="ChEBI" id="CHEBI:30616"/>
    </ligand>
</feature>
<feature type="binding site" evidence="1">
    <location>
        <begin position="12"/>
        <end position="17"/>
    </location>
    <ligand>
        <name>substrate</name>
    </ligand>
</feature>
<feature type="site" description="Interaction with substrate tRNA" evidence="1">
    <location>
        <position position="101"/>
    </location>
</feature>
<feature type="site" description="Interaction with substrate tRNA" evidence="1">
    <location>
        <position position="124"/>
    </location>
</feature>
<accession>B0K9L7</accession>
<keyword id="KW-0067">ATP-binding</keyword>
<keyword id="KW-0460">Magnesium</keyword>
<keyword id="KW-0547">Nucleotide-binding</keyword>
<keyword id="KW-1185">Reference proteome</keyword>
<keyword id="KW-0808">Transferase</keyword>
<keyword id="KW-0819">tRNA processing</keyword>
<sequence>MAIQIVLIVGPTASGKSKLAVDVAKEFNGEIISADSMQVYKYMDVGTAKITKEEMQGIPHYLIDIVEPDQEFSVAEYEKRAKEIIKDIYKRGKLPIIVGGTGLYINSIIYIMHFSDFEGSKEFREKMKELANTYGSQYLYEKLKSVDPEAAKKIHPNDIRRIIRALEVYEFTGKPISYYQKMSGMRLNPEYQPIMIGLNFRDRQILYDRINQRVDEMIKNNLVEEVVNLLKIGYNKDSTAMQALGYKEIVEYLKGEISLEEAIEKIKKGTRRYAKRQITWFKGYDFIKWFFVDDYKNYEELKKNIIKYLAGKLNF</sequence>
<comment type="function">
    <text evidence="1">Catalyzes the transfer of a dimethylallyl group onto the adenine at position 37 in tRNAs that read codons beginning with uridine, leading to the formation of N6-(dimethylallyl)adenosine (i(6)A).</text>
</comment>
<comment type="catalytic activity">
    <reaction evidence="1">
        <text>adenosine(37) in tRNA + dimethylallyl diphosphate = N(6)-dimethylallyladenosine(37) in tRNA + diphosphate</text>
        <dbReference type="Rhea" id="RHEA:26482"/>
        <dbReference type="Rhea" id="RHEA-COMP:10162"/>
        <dbReference type="Rhea" id="RHEA-COMP:10375"/>
        <dbReference type="ChEBI" id="CHEBI:33019"/>
        <dbReference type="ChEBI" id="CHEBI:57623"/>
        <dbReference type="ChEBI" id="CHEBI:74411"/>
        <dbReference type="ChEBI" id="CHEBI:74415"/>
        <dbReference type="EC" id="2.5.1.75"/>
    </reaction>
</comment>
<comment type="cofactor">
    <cofactor evidence="1">
        <name>Mg(2+)</name>
        <dbReference type="ChEBI" id="CHEBI:18420"/>
    </cofactor>
</comment>
<comment type="subunit">
    <text evidence="1">Monomer.</text>
</comment>
<comment type="similarity">
    <text evidence="1">Belongs to the IPP transferase family.</text>
</comment>
<proteinExistence type="inferred from homology"/>
<reference key="1">
    <citation type="submission" date="2008-01" db="EMBL/GenBank/DDBJ databases">
        <title>Complete sequence of Thermoanaerobacter pseudethanolicus 39E.</title>
        <authorList>
            <person name="Copeland A."/>
            <person name="Lucas S."/>
            <person name="Lapidus A."/>
            <person name="Barry K."/>
            <person name="Glavina del Rio T."/>
            <person name="Dalin E."/>
            <person name="Tice H."/>
            <person name="Pitluck S."/>
            <person name="Bruce D."/>
            <person name="Goodwin L."/>
            <person name="Saunders E."/>
            <person name="Brettin T."/>
            <person name="Detter J.C."/>
            <person name="Han C."/>
            <person name="Schmutz J."/>
            <person name="Larimer F."/>
            <person name="Land M."/>
            <person name="Hauser L."/>
            <person name="Kyrpides N."/>
            <person name="Lykidis A."/>
            <person name="Hemme C."/>
            <person name="Fields M.W."/>
            <person name="He Z."/>
            <person name="Zhou J."/>
            <person name="Richardson P."/>
        </authorList>
    </citation>
    <scope>NUCLEOTIDE SEQUENCE [LARGE SCALE GENOMIC DNA]</scope>
    <source>
        <strain>ATCC 33223 / DSM 2355 / 39E</strain>
    </source>
</reference>
<name>MIAA_THEP3</name>